<feature type="chain" id="PRO_1000012365" description="UDP-N-acetylmuramyl-tripeptide synthetase">
    <location>
        <begin position="1"/>
        <end position="483"/>
    </location>
</feature>
<feature type="binding site" evidence="1">
    <location>
        <position position="43"/>
    </location>
    <ligand>
        <name>UDP-N-acetyl-alpha-D-muramoyl-L-alanyl-D-glutamate</name>
        <dbReference type="ChEBI" id="CHEBI:83900"/>
    </ligand>
</feature>
<feature type="binding site" evidence="1">
    <location>
        <begin position="116"/>
        <end position="122"/>
    </location>
    <ligand>
        <name>ATP</name>
        <dbReference type="ChEBI" id="CHEBI:30616"/>
    </ligand>
</feature>
<feature type="binding site" evidence="1">
    <location>
        <begin position="160"/>
        <end position="161"/>
    </location>
    <ligand>
        <name>UDP-N-acetyl-alpha-D-muramoyl-L-alanyl-D-glutamate</name>
        <dbReference type="ChEBI" id="CHEBI:83900"/>
    </ligand>
</feature>
<feature type="binding site" evidence="1">
    <location>
        <position position="187"/>
    </location>
    <ligand>
        <name>UDP-N-acetyl-alpha-D-muramoyl-L-alanyl-D-glutamate</name>
        <dbReference type="ChEBI" id="CHEBI:83900"/>
    </ligand>
</feature>
<feature type="binding site" evidence="1">
    <location>
        <position position="195"/>
    </location>
    <ligand>
        <name>UDP-N-acetyl-alpha-D-muramoyl-L-alanyl-D-glutamate</name>
        <dbReference type="ChEBI" id="CHEBI:83900"/>
    </ligand>
</feature>
<feature type="modified residue" description="N6-carboxylysine" evidence="1">
    <location>
        <position position="229"/>
    </location>
</feature>
<gene>
    <name evidence="1" type="primary">murE</name>
    <name type="ordered locus">llmg_1989</name>
</gene>
<keyword id="KW-0067">ATP-binding</keyword>
<keyword id="KW-0131">Cell cycle</keyword>
<keyword id="KW-0132">Cell division</keyword>
<keyword id="KW-0133">Cell shape</keyword>
<keyword id="KW-0961">Cell wall biogenesis/degradation</keyword>
<keyword id="KW-0963">Cytoplasm</keyword>
<keyword id="KW-0436">Ligase</keyword>
<keyword id="KW-0547">Nucleotide-binding</keyword>
<keyword id="KW-0573">Peptidoglycan synthesis</keyword>
<reference key="1">
    <citation type="journal article" date="2007" name="J. Bacteriol.">
        <title>The complete genome sequence of the lactic acid bacterial paradigm Lactococcus lactis subsp. cremoris MG1363.</title>
        <authorList>
            <person name="Wegmann U."/>
            <person name="O'Connell-Motherway M."/>
            <person name="Zomer A."/>
            <person name="Buist G."/>
            <person name="Shearman C."/>
            <person name="Canchaya C."/>
            <person name="Ventura M."/>
            <person name="Goesmann A."/>
            <person name="Gasson M.J."/>
            <person name="Kuipers O.P."/>
            <person name="van Sinderen D."/>
            <person name="Kok J."/>
        </authorList>
    </citation>
    <scope>NUCLEOTIDE SEQUENCE [LARGE SCALE GENOMIC DNA]</scope>
    <source>
        <strain>MG1363</strain>
    </source>
</reference>
<dbReference type="EC" id="6.3.2.-" evidence="1"/>
<dbReference type="EMBL" id="AM406671">
    <property type="protein sequence ID" value="CAL98559.1"/>
    <property type="molecule type" value="Genomic_DNA"/>
</dbReference>
<dbReference type="RefSeq" id="WP_011835723.1">
    <property type="nucleotide sequence ID" value="NC_009004.1"/>
</dbReference>
<dbReference type="SMR" id="A2RMM5"/>
<dbReference type="STRING" id="416870.llmg_1989"/>
<dbReference type="KEGG" id="llm:llmg_1989"/>
<dbReference type="eggNOG" id="COG0769">
    <property type="taxonomic scope" value="Bacteria"/>
</dbReference>
<dbReference type="HOGENOM" id="CLU_022291_4_2_9"/>
<dbReference type="OrthoDB" id="9800958at2"/>
<dbReference type="PhylomeDB" id="A2RMM5"/>
<dbReference type="UniPathway" id="UPA00219"/>
<dbReference type="Proteomes" id="UP000000364">
    <property type="component" value="Chromosome"/>
</dbReference>
<dbReference type="GO" id="GO:0005737">
    <property type="term" value="C:cytoplasm"/>
    <property type="evidence" value="ECO:0007669"/>
    <property type="project" value="UniProtKB-SubCell"/>
</dbReference>
<dbReference type="GO" id="GO:0016881">
    <property type="term" value="F:acid-amino acid ligase activity"/>
    <property type="evidence" value="ECO:0007669"/>
    <property type="project" value="UniProtKB-UniRule"/>
</dbReference>
<dbReference type="GO" id="GO:0005524">
    <property type="term" value="F:ATP binding"/>
    <property type="evidence" value="ECO:0007669"/>
    <property type="project" value="UniProtKB-UniRule"/>
</dbReference>
<dbReference type="GO" id="GO:0000287">
    <property type="term" value="F:magnesium ion binding"/>
    <property type="evidence" value="ECO:0007669"/>
    <property type="project" value="UniProtKB-UniRule"/>
</dbReference>
<dbReference type="GO" id="GO:0051301">
    <property type="term" value="P:cell division"/>
    <property type="evidence" value="ECO:0007669"/>
    <property type="project" value="UniProtKB-KW"/>
</dbReference>
<dbReference type="GO" id="GO:0071555">
    <property type="term" value="P:cell wall organization"/>
    <property type="evidence" value="ECO:0007669"/>
    <property type="project" value="UniProtKB-KW"/>
</dbReference>
<dbReference type="GO" id="GO:0009252">
    <property type="term" value="P:peptidoglycan biosynthetic process"/>
    <property type="evidence" value="ECO:0007669"/>
    <property type="project" value="UniProtKB-UniRule"/>
</dbReference>
<dbReference type="GO" id="GO:0008360">
    <property type="term" value="P:regulation of cell shape"/>
    <property type="evidence" value="ECO:0007669"/>
    <property type="project" value="UniProtKB-KW"/>
</dbReference>
<dbReference type="Gene3D" id="3.90.190.20">
    <property type="entry name" value="Mur ligase, C-terminal domain"/>
    <property type="match status" value="1"/>
</dbReference>
<dbReference type="Gene3D" id="3.40.1190.10">
    <property type="entry name" value="Mur-like, catalytic domain"/>
    <property type="match status" value="1"/>
</dbReference>
<dbReference type="Gene3D" id="3.40.1390.10">
    <property type="entry name" value="MurE/MurF, N-terminal domain"/>
    <property type="match status" value="1"/>
</dbReference>
<dbReference type="HAMAP" id="MF_00208">
    <property type="entry name" value="MurE"/>
    <property type="match status" value="1"/>
</dbReference>
<dbReference type="InterPro" id="IPR036565">
    <property type="entry name" value="Mur-like_cat_sf"/>
</dbReference>
<dbReference type="InterPro" id="IPR004101">
    <property type="entry name" value="Mur_ligase_C"/>
</dbReference>
<dbReference type="InterPro" id="IPR036615">
    <property type="entry name" value="Mur_ligase_C_dom_sf"/>
</dbReference>
<dbReference type="InterPro" id="IPR013221">
    <property type="entry name" value="Mur_ligase_cen"/>
</dbReference>
<dbReference type="InterPro" id="IPR035911">
    <property type="entry name" value="MurE/MurF_N"/>
</dbReference>
<dbReference type="InterPro" id="IPR005761">
    <property type="entry name" value="UDP-N-AcMur-Glu-dNH2Pim_ligase"/>
</dbReference>
<dbReference type="NCBIfam" id="TIGR01085">
    <property type="entry name" value="murE"/>
    <property type="match status" value="1"/>
</dbReference>
<dbReference type="NCBIfam" id="NF001131">
    <property type="entry name" value="PRK00139.2-5"/>
    <property type="match status" value="1"/>
</dbReference>
<dbReference type="NCBIfam" id="NF010628">
    <property type="entry name" value="PRK14022.1"/>
    <property type="match status" value="1"/>
</dbReference>
<dbReference type="PANTHER" id="PTHR23135">
    <property type="entry name" value="MUR LIGASE FAMILY MEMBER"/>
    <property type="match status" value="1"/>
</dbReference>
<dbReference type="PANTHER" id="PTHR23135:SF4">
    <property type="entry name" value="UDP-N-ACETYLMURAMOYL-L-ALANYL-D-GLUTAMATE--2,6-DIAMINOPIMELATE LIGASE MURE HOMOLOG, CHLOROPLASTIC"/>
    <property type="match status" value="1"/>
</dbReference>
<dbReference type="Pfam" id="PF02875">
    <property type="entry name" value="Mur_ligase_C"/>
    <property type="match status" value="1"/>
</dbReference>
<dbReference type="Pfam" id="PF08245">
    <property type="entry name" value="Mur_ligase_M"/>
    <property type="match status" value="1"/>
</dbReference>
<dbReference type="SUPFAM" id="SSF53623">
    <property type="entry name" value="MurD-like peptide ligases, catalytic domain"/>
    <property type="match status" value="1"/>
</dbReference>
<dbReference type="SUPFAM" id="SSF53244">
    <property type="entry name" value="MurD-like peptide ligases, peptide-binding domain"/>
    <property type="match status" value="1"/>
</dbReference>
<dbReference type="SUPFAM" id="SSF63418">
    <property type="entry name" value="MurE/MurF N-terminal domain"/>
    <property type="match status" value="1"/>
</dbReference>
<protein>
    <recommendedName>
        <fullName evidence="1">UDP-N-acetylmuramyl-tripeptide synthetase</fullName>
        <ecNumber evidence="1">6.3.2.-</ecNumber>
    </recommendedName>
    <alternativeName>
        <fullName evidence="1">UDP-MurNAc-tripeptide synthetase</fullName>
    </alternativeName>
</protein>
<evidence type="ECO:0000255" key="1">
    <source>
        <dbReference type="HAMAP-Rule" id="MF_00208"/>
    </source>
</evidence>
<organism>
    <name type="scientific">Lactococcus lactis subsp. cremoris (strain MG1363)</name>
    <dbReference type="NCBI Taxonomy" id="416870"/>
    <lineage>
        <taxon>Bacteria</taxon>
        <taxon>Bacillati</taxon>
        <taxon>Bacillota</taxon>
        <taxon>Bacilli</taxon>
        <taxon>Lactobacillales</taxon>
        <taxon>Streptococcaceae</taxon>
        <taxon>Lactococcus</taxon>
        <taxon>Lactococcus cremoris subsp. cremoris</taxon>
    </lineage>
</organism>
<sequence>MIKLEQVVEILKKDNNFREISSAGEYYFNWPKEVNFDQLSYDSRKSTKDTLFFAKGLNFKKEYLTDLEAAFYVSEFDYEVALPAIIVTDVKRAMALIAANFYEFPQNKLKTLALTGTKGKTTSAYFAKAILDKMNGGKTALLSTAQTTLDGQNYFKSELTTPESLDLLEMMAKALENGMTHLVMEVSSQAYKTERVYGLTFDVGVFLNISPDHIGPVEHPTLEDYFYCKRQLLKNSRYFVANAEMNHFAIIKEELNERKIPHAFYGADSENKIIESKGLHFVTDGSVSGEFDIRLLGRFNQENALATALATKALGASFENIRQGLASAIVPGRMELLTAKNGAHIYIDYAHNGLSLENLVEVVEDHHAGQLFLVLGSTGNKGESRRKDFGQVIENHPRLNVILTTDDSNRENPKTIADEIASFVSRELDFELDREFAIKKAISKTQNSDDAVIIAGKGADMFQLKDGKREPYIGDSPAAQKYL</sequence>
<name>MURE_LACLM</name>
<proteinExistence type="inferred from homology"/>
<accession>A2RMM5</accession>
<comment type="function">
    <text evidence="1">Catalyzes the addition of an amino acid to the nucleotide precursor UDP-N-acetylmuramoyl-L-alanyl-D-glutamate (UMAG) in the biosynthesis of bacterial cell-wall peptidoglycan.</text>
</comment>
<comment type="pathway">
    <text evidence="1">Cell wall biogenesis; peptidoglycan biosynthesis.</text>
</comment>
<comment type="subcellular location">
    <subcellularLocation>
        <location evidence="1">Cytoplasm</location>
    </subcellularLocation>
</comment>
<comment type="PTM">
    <text evidence="1">Carboxylation is probably crucial for Mg(2+) binding and, consequently, for the gamma-phosphate positioning of ATP.</text>
</comment>
<comment type="similarity">
    <text evidence="1">Belongs to the MurCDEF family. MurE subfamily.</text>
</comment>